<keyword id="KW-0002">3D-structure</keyword>
<keyword id="KW-0119">Carbohydrate metabolism</keyword>
<keyword id="KW-0903">Direct protein sequencing</keyword>
<keyword id="KW-1015">Disulfide bond</keyword>
<keyword id="KW-0325">Glycoprotein</keyword>
<keyword id="KW-0378">Hydrolase</keyword>
<keyword id="KW-0624">Polysaccharide degradation</keyword>
<keyword id="KW-0964">Secreted</keyword>
<keyword id="KW-0719">Serine esterase</keyword>
<keyword id="KW-0732">Signal</keyword>
<keyword id="KW-0858">Xylan degradation</keyword>
<organism>
    <name type="scientific">Aspergillus niger</name>
    <dbReference type="NCBI Taxonomy" id="5061"/>
    <lineage>
        <taxon>Eukaryota</taxon>
        <taxon>Fungi</taxon>
        <taxon>Dikarya</taxon>
        <taxon>Ascomycota</taxon>
        <taxon>Pezizomycotina</taxon>
        <taxon>Eurotiomycetes</taxon>
        <taxon>Eurotiomycetidae</taxon>
        <taxon>Eurotiales</taxon>
        <taxon>Aspergillaceae</taxon>
        <taxon>Aspergillus</taxon>
        <taxon>Aspergillus subgen. Circumdati</taxon>
    </lineage>
</organism>
<name>FAEA_ASPNG</name>
<reference key="1">
    <citation type="journal article" date="1997" name="Appl. Environ. Microbiol.">
        <title>The faeA genes from Aspergillus niger and Aspergillus tubingensis encode ferulic acid esterases involved in degradation of complex cell wall polysaccharides.</title>
        <authorList>
            <person name="de Vries R.P."/>
            <person name="Michelsen B."/>
            <person name="Poulsen C.H."/>
            <person name="Kroon P.A."/>
            <person name="van den Heuvel R.H.H."/>
            <person name="Faulds C.B."/>
            <person name="Williamson G."/>
            <person name="van den Hombergh J.P.T.W."/>
            <person name="Visser J."/>
        </authorList>
    </citation>
    <scope>NUCLEOTIDE SEQUENCE [GENOMIC DNA]</scope>
    <scope>PROTEIN SEQUENCE OF 22-107 AND 134-179</scope>
    <scope>MASS SPECTROMETRY</scope>
    <scope>FUNCTION</scope>
    <scope>SUBCELLULAR LOCATION</scope>
    <source>
        <strain>ATCC 9029 / NRRL 3 / CBS 120.49 / DSM 2466 / N400 / FGSC 732</strain>
    </source>
</reference>
<reference key="2">
    <citation type="journal article" date="2001" name="FEMS Yeast Res.">
        <title>High-level production of recombinant Aspergillus niger cinnamoyl esterase (FAEA) in the methylotrophic yeast Pichia pastoris.</title>
        <authorList>
            <person name="Juge N."/>
            <person name="Williamson G."/>
            <person name="Puigserver A."/>
            <person name="Cummings N.J."/>
            <person name="Connerton I.F."/>
            <person name="Faulds C.B."/>
        </authorList>
    </citation>
    <scope>NUCLEOTIDE SEQUENCE [MRNA]</scope>
</reference>
<reference key="3">
    <citation type="submission" date="2008-10" db="EMBL/GenBank/DDBJ databases">
        <title>Cloning and directed evolution of feruloyl esterase from Aspergillus niger.</title>
        <authorList>
            <person name="Zhang S."/>
            <person name="Pei X."/>
            <person name="Wu Z."/>
        </authorList>
    </citation>
    <scope>NUCLEOTIDE SEQUENCE [MRNA]</scope>
    <source>
        <strain>CIB423.1</strain>
    </source>
</reference>
<reference key="4">
    <citation type="submission" date="2009-11" db="EMBL/GenBank/DDBJ databases">
        <title>Molecular docking of feruloyl esterase A and ferulic acid substrate using computer modeling.</title>
        <authorList>
            <person name="Hu X.S."/>
            <person name="Li X.L."/>
        </authorList>
    </citation>
    <scope>NUCLEOTIDE SEQUENCE [MRNA]</scope>
</reference>
<reference key="5">
    <citation type="journal article" date="1994" name="Microbiology">
        <title>Purification and characterisation of a ferulic acid esterase (FAE-III) from Aspergillus niger: specificity for the phenolic moiety and binding to microcrystalline cellulose.</title>
        <authorList>
            <person name="Faulds C.B."/>
            <person name="Williamson G."/>
        </authorList>
    </citation>
    <scope>FUNCTION</scope>
    <scope>SUBCELLULAR LOCATION</scope>
    <source>
        <strain>ATCC 9029 / NRRL 3 / CBS 120.49 / DSM 2466 / N400 / FGSC 732</strain>
    </source>
</reference>
<reference key="6">
    <citation type="journal article" date="1994" name="Carbohydr. Res.">
        <title>Degradation of feruloylated oligosaccharides from sugar-beet pulp and wheat bran by ferulic acid esterases from Aspergillus niger.</title>
        <authorList>
            <person name="Ralet M.C."/>
            <person name="Faulds C.B."/>
            <person name="Williamson G."/>
            <person name="Thibault J.F."/>
        </authorList>
    </citation>
    <scope>FUNCTION</scope>
</reference>
<reference key="7">
    <citation type="journal article" date="1998" name="Biochem. Soc. Trans.">
        <title>Identification of active site residues in a ferulic acid esterase (FAE-III) from Aspergillus niger.</title>
        <authorList>
            <person name="Aliwan F.O."/>
            <person name="Williamson G."/>
        </authorList>
    </citation>
    <scope>FUNCTION</scope>
    <scope>ACTIVITY REGULATION</scope>
</reference>
<reference key="8">
    <citation type="journal article" date="1999" name="Appl. Environ. Microbiol.">
        <title>Regulation of the feruloyl esterase (faeA) gene from Aspergillus niger.</title>
        <authorList>
            <person name="de Vries R.P."/>
            <person name="Visser J."/>
        </authorList>
    </citation>
    <scope>INDUCTION</scope>
</reference>
<reference key="9">
    <citation type="journal article" date="2002" name="Biochem. J.">
        <title>The Aspergillus niger faeB gene encodes a second feruloyl esterase involved in pectin and xylan degradation and is specifically induced in the presence of aromatic compounds.</title>
        <authorList>
            <person name="de Vries R.P."/>
            <person name="vanKuyk P.A."/>
            <person name="Kester H.C."/>
            <person name="Visser J."/>
        </authorList>
    </citation>
    <scope>FUNCTION</scope>
    <scope>INDUCTION</scope>
    <source>
        <strain>ATCC 9089 / N402</strain>
    </source>
</reference>
<reference key="10">
    <citation type="journal article" date="2004" name="Acta Crystallogr. D">
        <title>Structure of a feruloyl esterase from Aspergillus niger.</title>
        <authorList>
            <person name="McAuley K.E."/>
            <person name="Svendsen A."/>
            <person name="Patkar S.A."/>
            <person name="Wilson K.S."/>
        </authorList>
    </citation>
    <scope>X-RAY CRYSTALLOGRAPHY (1.08 ANGSTROMS) OF 22-281 IN COMPLEX WITH FERULIC ACID</scope>
</reference>
<reference key="11">
    <citation type="journal article" date="2004" name="J. Mol. Biol.">
        <title>The crystal structure of feruloyl esterase A from Aspergillus niger suggests evolutive functional convergence in feruloyl esterase family.</title>
        <authorList>
            <person name="Hermoso J.A."/>
            <person name="Sanz-Aparicio J."/>
            <person name="Molina R."/>
            <person name="Juge N."/>
            <person name="Gonzalez R."/>
            <person name="Faulds C.B."/>
        </authorList>
    </citation>
    <scope>X-RAY CRYSTALLOGRAPHY (2.5 ANGSTROMS) OF 22-281</scope>
    <scope>DISULFIDE BONDS</scope>
    <scope>FUNCTION</scope>
    <scope>MUTAGENESIS OF SER-154</scope>
</reference>
<reference key="12">
    <citation type="journal article" date="2005" name="FEBS J.">
        <title>Probing the determinants of substrate specificity of a feruloyl esterase, AnFaeA, from Aspergillus niger.</title>
        <authorList>
            <person name="Faulds C.B."/>
            <person name="Molina R."/>
            <person name="Gonzalez R."/>
            <person name="Husband F."/>
            <person name="Juge N."/>
            <person name="Sanz-Aparicio J."/>
            <person name="Hermoso J.A."/>
        </authorList>
    </citation>
    <scope>X-RAY CRYSTALLOGRAPHY (2.54 ANGSTROMS) OF 22-281 OF MUTANT SER-154 IN COMPLEX WITH SUBSTRATE</scope>
    <scope>MUTAGENESIS OF TYR-101 AND TRP-281</scope>
</reference>
<reference key="13">
    <citation type="journal article" date="2006" name="FEBS Lett.">
        <title>Respective importance of protein folding and glycosylation in the thermal stability of recombinant feruloyl esterase A.</title>
        <authorList>
            <person name="Benoit I."/>
            <person name="Asther M."/>
            <person name="Sulzenbacher G."/>
            <person name="Record E."/>
            <person name="Marmuse L."/>
            <person name="Parsiegla G."/>
            <person name="Gimbert I."/>
            <person name="Asther M."/>
            <person name="Bignon C."/>
        </authorList>
    </citation>
    <scope>X-RAY CRYSTALLOGRAPHY (1.55 ANGSTROMS) OF 22-281</scope>
    <scope>GLYCOSYLATION</scope>
    <scope>FUNCTION</scope>
    <scope>BIOPHYSICOCHEMICAL PROPERTIES</scope>
</reference>
<protein>
    <recommendedName>
        <fullName>Feruloyl esterase A</fullName>
        <ecNumber>3.1.1.73</ecNumber>
    </recommendedName>
    <alternativeName>
        <fullName>Cinnamoyl esterase</fullName>
    </alternativeName>
    <alternativeName>
        <fullName>FAE-III</fullName>
    </alternativeName>
    <alternativeName>
        <fullName>Ferulic acid esterase A</fullName>
    </alternativeName>
</protein>
<sequence length="281" mass="30537">MKQFSAKYALILLATAGQALAASTQGISEDLYNRLVEMATISQAAYADLCNIPSTIIKGEKIYNAQTDINGWILRDDTSKEIITVFRGTGSDTNLQLDTNYTLTPFDTLPQCNDCEVHGGYYIGWISVQDQVESLVKQQASQYPDYALTVTGHSLGASMAALTAAQLSATYDNVRLYTFGEPRSGNQAFASYMNDAFQVSSPETTQYFRVTHSNDGIPNLPPADEGYAHGGVEYWSVDPYSAQNTFVCTGDEVQCCEAQGGQGVNDAHTTYFGMTSGACTW</sequence>
<comment type="function">
    <text evidence="2 3 5 6 7 8 9">Involved in degradation of plant cell walls. Hydrolyzes the feruloyl-arabinose ester bond in arabinoxylans, and the feruloyl-galactose ester bond in pectin. Binds to cellulose.</text>
</comment>
<comment type="catalytic activity">
    <reaction>
        <text>feruloyl-polysaccharide + H2O = ferulate + polysaccharide.</text>
        <dbReference type="EC" id="3.1.1.73"/>
    </reaction>
</comment>
<comment type="activity regulation">
    <text evidence="8">Inhibited by the specific serine esterase inhibitor diisopropylfluorophosphate.</text>
</comment>
<comment type="biophysicochemical properties">
    <kinetics>
        <KM evidence="5">0.31 mM for methyl ferulate</KM>
    </kinetics>
    <phDependence>
        <text evidence="5">Optimum pH is 5.0.</text>
    </phDependence>
    <temperatureDependence>
        <text evidence="5">Optimum temperature is 55-60 degrees Celsius.</text>
    </temperatureDependence>
</comment>
<comment type="subcellular location">
    <subcellularLocation>
        <location evidence="7 9">Secreted</location>
    </subcellularLocation>
</comment>
<comment type="induction">
    <text evidence="1 2">By xylose and arabinose, probably via the xylanolytic transcriptional activator XlnR. By ferulic acid, vanillic acid and other aromatic residues with the following substituants on the aromatic ring: a methoxy group at C-3, a hydroxy group at C-4 and an unsubstituted C-5. Repressed by simple sugars, probably via the carbon catabolite repressor protein CreA.</text>
</comment>
<comment type="PTM">
    <text evidence="12">Glycosylated.</text>
</comment>
<comment type="mass spectrometry" mass="29738.0" error="50.0" method="MALDI" evidence="7"/>
<comment type="similarity">
    <text evidence="10">Belongs to the AB hydrolase superfamily. FaeA family.</text>
</comment>
<feature type="signal peptide" evidence="7">
    <location>
        <begin position="1"/>
        <end position="21"/>
    </location>
</feature>
<feature type="chain" id="PRO_0000021226" description="Feruloyl esterase A">
    <location>
        <begin position="22"/>
        <end position="281"/>
    </location>
</feature>
<feature type="active site" description="Nucleophile" evidence="3">
    <location>
        <position position="154"/>
    </location>
</feature>
<feature type="active site" description="Charge relay system" evidence="11">
    <location>
        <position position="215"/>
    </location>
</feature>
<feature type="active site" description="Charge relay system" evidence="11">
    <location>
        <position position="268"/>
    </location>
</feature>
<feature type="binding site" evidence="4">
    <location>
        <position position="98"/>
    </location>
    <ligand>
        <name>substrate</name>
    </ligand>
</feature>
<feature type="binding site" evidence="4">
    <location>
        <position position="101"/>
    </location>
    <ligand>
        <name>substrate</name>
    </ligand>
</feature>
<feature type="binding site" evidence="4">
    <location>
        <position position="268"/>
    </location>
    <ligand>
        <name>substrate</name>
    </ligand>
</feature>
<feature type="glycosylation site" description="N-linked (GlcNAc...) asparagine" evidence="5">
    <location>
        <position position="100"/>
    </location>
</feature>
<feature type="disulfide bond" evidence="3">
    <location>
        <begin position="50"/>
        <end position="279"/>
    </location>
</feature>
<feature type="disulfide bond" evidence="3">
    <location>
        <begin position="112"/>
        <end position="115"/>
    </location>
</feature>
<feature type="disulfide bond" evidence="3">
    <location>
        <begin position="248"/>
        <end position="255"/>
    </location>
</feature>
<feature type="mutagenesis site" description="Decreases feruloyl esterase activity." evidence="4">
    <original>Y</original>
    <variation>V</variation>
    <variation>S</variation>
    <location>
        <position position="101"/>
    </location>
</feature>
<feature type="mutagenesis site" description="Impairs catalytic activity." evidence="3">
    <original>S</original>
    <variation>A</variation>
    <location>
        <position position="154"/>
    </location>
</feature>
<feature type="mutagenesis site" description="Decreases feruloyl esterase activity." evidence="4">
    <original>W</original>
    <variation>V</variation>
    <variation>S</variation>
    <location>
        <position position="281"/>
    </location>
</feature>
<feature type="sequence conflict" description="In Ref. 3; ACJ64498." evidence="10" ref="3">
    <original>L</original>
    <variation>S</variation>
    <location>
        <position position="13"/>
    </location>
</feature>
<feature type="sequence conflict" description="In Ref. 4; ACZ95366." evidence="10" ref="4">
    <original>S</original>
    <variation>F</variation>
    <location>
        <position position="23"/>
    </location>
</feature>
<feature type="sequence conflict" description="In Ref. 4; ACZ95366." evidence="10" ref="4">
    <original>A</original>
    <variation>P</variation>
    <location>
        <position position="44"/>
    </location>
</feature>
<feature type="sequence conflict" description="In Ref. 3; ACJ64498." evidence="10" ref="3">
    <original>I</original>
    <variation>T</variation>
    <location>
        <position position="56"/>
    </location>
</feature>
<feature type="sequence conflict" description="In Ref. 3; ACJ64498." evidence="10" ref="3">
    <original>D</original>
    <variation>E</variation>
    <location>
        <position position="107"/>
    </location>
</feature>
<feature type="sequence conflict" description="In Ref. 3; ACJ64498." evidence="10" ref="3">
    <original>N</original>
    <variation>S</variation>
    <location>
        <position position="113"/>
    </location>
</feature>
<feature type="sequence conflict" description="In Ref. 3; ACJ64498." evidence="10" ref="3">
    <original>V</original>
    <variation>I</variation>
    <location>
        <position position="128"/>
    </location>
</feature>
<feature type="sequence conflict" description="In Ref. 4; ACZ95366." evidence="10" ref="4">
    <original>Q</original>
    <variation>K</variation>
    <location>
        <position position="142"/>
    </location>
</feature>
<feature type="sequence conflict" description="In Ref. 3; ACJ64498." evidence="10" ref="3">
    <original>V</original>
    <variation>M</variation>
    <location>
        <position position="150"/>
    </location>
</feature>
<feature type="sequence conflict" description="In Ref. 1; AA sequence." evidence="10" ref="1">
    <original>M</original>
    <variation>L</variation>
    <location>
        <position position="159"/>
    </location>
</feature>
<feature type="sequence conflict" description="In Ref. 1; AA sequence." evidence="10" ref="1">
    <original>V</original>
    <variation>I</variation>
    <location>
        <position position="174"/>
    </location>
</feature>
<feature type="sequence conflict" description="In Ref. 4; ACZ95366." evidence="10" ref="4">
    <original>T</original>
    <variation>I</variation>
    <location>
        <position position="205"/>
    </location>
</feature>
<feature type="sequence conflict" description="In Ref. 3; ACJ64498." evidence="10" ref="3">
    <original>F</original>
    <variation>S</variation>
    <location>
        <position position="208"/>
    </location>
</feature>
<feature type="sequence conflict" description="In Ref. 2; AAK60631, 3; ACJ64498 and 4; ACZ95366." evidence="10" ref="2 3 4">
    <original>D</original>
    <variation>E</variation>
    <location>
        <position position="224"/>
    </location>
</feature>
<feature type="sequence conflict" description="In Ref. 2; AAK60631 and 3; ACJ64498." evidence="10" ref="2 3">
    <original>E</original>
    <variation>Q</variation>
    <location>
        <position position="225"/>
    </location>
</feature>
<feature type="sequence conflict" description="In Ref. 3; ACJ64498." evidence="10" ref="3">
    <original>V</original>
    <variation>A</variation>
    <location>
        <position position="264"/>
    </location>
</feature>
<feature type="strand" evidence="14">
    <location>
        <begin position="23"/>
        <end position="25"/>
    </location>
</feature>
<feature type="helix" evidence="14">
    <location>
        <begin position="29"/>
        <end position="44"/>
    </location>
</feature>
<feature type="turn" evidence="14">
    <location>
        <begin position="45"/>
        <end position="51"/>
    </location>
</feature>
<feature type="strand" evidence="14">
    <location>
        <begin position="56"/>
        <end position="64"/>
    </location>
</feature>
<feature type="turn" evidence="14">
    <location>
        <begin position="65"/>
        <end position="68"/>
    </location>
</feature>
<feature type="strand" evidence="14">
    <location>
        <begin position="69"/>
        <end position="76"/>
    </location>
</feature>
<feature type="turn" evidence="14">
    <location>
        <begin position="77"/>
        <end position="80"/>
    </location>
</feature>
<feature type="strand" evidence="14">
    <location>
        <begin position="81"/>
        <end position="86"/>
    </location>
</feature>
<feature type="helix" evidence="14">
    <location>
        <begin position="92"/>
        <end position="98"/>
    </location>
</feature>
<feature type="strand" evidence="14">
    <location>
        <begin position="103"/>
        <end position="105"/>
    </location>
</feature>
<feature type="strand" evidence="14">
    <location>
        <begin position="116"/>
        <end position="118"/>
    </location>
</feature>
<feature type="helix" evidence="14">
    <location>
        <begin position="119"/>
        <end position="142"/>
    </location>
</feature>
<feature type="strand" evidence="14">
    <location>
        <begin position="146"/>
        <end position="153"/>
    </location>
</feature>
<feature type="helix" evidence="14">
    <location>
        <begin position="155"/>
        <end position="168"/>
    </location>
</feature>
<feature type="strand" evidence="14">
    <location>
        <begin position="172"/>
        <end position="180"/>
    </location>
</feature>
<feature type="helix" evidence="14">
    <location>
        <begin position="187"/>
        <end position="196"/>
    </location>
</feature>
<feature type="turn" evidence="14">
    <location>
        <begin position="197"/>
        <end position="200"/>
    </location>
</feature>
<feature type="turn" evidence="14">
    <location>
        <begin position="202"/>
        <end position="204"/>
    </location>
</feature>
<feature type="strand" evidence="14">
    <location>
        <begin position="206"/>
        <end position="212"/>
    </location>
</feature>
<feature type="helix" evidence="14">
    <location>
        <begin position="217"/>
        <end position="219"/>
    </location>
</feature>
<feature type="helix" evidence="14">
    <location>
        <begin position="223"/>
        <end position="225"/>
    </location>
</feature>
<feature type="strand" evidence="14">
    <location>
        <begin position="231"/>
        <end position="236"/>
    </location>
</feature>
<feature type="helix" evidence="14">
    <location>
        <begin position="242"/>
        <end position="244"/>
    </location>
</feature>
<feature type="strand" evidence="14">
    <location>
        <begin position="245"/>
        <end position="248"/>
    </location>
</feature>
<feature type="strand" evidence="14">
    <location>
        <begin position="250"/>
        <end position="252"/>
    </location>
</feature>
<feature type="helix" evidence="14">
    <location>
        <begin position="255"/>
        <end position="259"/>
    </location>
</feature>
<feature type="helix" evidence="14">
    <location>
        <begin position="266"/>
        <end position="269"/>
    </location>
</feature>
<feature type="strand" evidence="13">
    <location>
        <begin position="274"/>
        <end position="277"/>
    </location>
</feature>
<evidence type="ECO:0000269" key="1">
    <source>
    </source>
</evidence>
<evidence type="ECO:0000269" key="2">
    <source>
    </source>
</evidence>
<evidence type="ECO:0000269" key="3">
    <source>
    </source>
</evidence>
<evidence type="ECO:0000269" key="4">
    <source>
    </source>
</evidence>
<evidence type="ECO:0000269" key="5">
    <source>
    </source>
</evidence>
<evidence type="ECO:0000269" key="6">
    <source>
    </source>
</evidence>
<evidence type="ECO:0000269" key="7">
    <source>
    </source>
</evidence>
<evidence type="ECO:0000269" key="8">
    <source>
    </source>
</evidence>
<evidence type="ECO:0000269" key="9">
    <source ref="5"/>
</evidence>
<evidence type="ECO:0000305" key="10"/>
<evidence type="ECO:0000305" key="11">
    <source>
    </source>
</evidence>
<evidence type="ECO:0000305" key="12">
    <source>
    </source>
</evidence>
<evidence type="ECO:0007829" key="13">
    <source>
        <dbReference type="PDB" id="1USW"/>
    </source>
</evidence>
<evidence type="ECO:0007829" key="14">
    <source>
        <dbReference type="PDB" id="1UWC"/>
    </source>
</evidence>
<accession>O42807</accession>
<accession>B8XRG2</accession>
<accession>D2K873</accession>
<accession>Q96W70</accession>
<proteinExistence type="evidence at protein level"/>
<dbReference type="EC" id="3.1.1.73"/>
<dbReference type="EMBL" id="Y09330">
    <property type="protein sequence ID" value="CAA70510.1"/>
    <property type="molecule type" value="Genomic_DNA"/>
</dbReference>
<dbReference type="EMBL" id="AF361950">
    <property type="protein sequence ID" value="AAK60631.1"/>
    <property type="molecule type" value="mRNA"/>
</dbReference>
<dbReference type="EMBL" id="FJ430154">
    <property type="protein sequence ID" value="ACJ64498.1"/>
    <property type="molecule type" value="mRNA"/>
</dbReference>
<dbReference type="EMBL" id="GU188042">
    <property type="protein sequence ID" value="ACZ95366.1"/>
    <property type="molecule type" value="mRNA"/>
</dbReference>
<dbReference type="PDB" id="1USW">
    <property type="method" value="X-ray"/>
    <property type="resolution" value="2.50 A"/>
    <property type="chains" value="A=22-281"/>
</dbReference>
<dbReference type="PDB" id="1UWC">
    <property type="method" value="X-ray"/>
    <property type="resolution" value="1.08 A"/>
    <property type="chains" value="A/B=22-281"/>
</dbReference>
<dbReference type="PDB" id="1UZA">
    <property type="method" value="X-ray"/>
    <property type="resolution" value="1.50 A"/>
    <property type="chains" value="A/B=22-281"/>
</dbReference>
<dbReference type="PDB" id="2BJH">
    <property type="method" value="X-ray"/>
    <property type="resolution" value="2.54 A"/>
    <property type="chains" value="A/B/C=22-281"/>
</dbReference>
<dbReference type="PDB" id="2HL6">
    <property type="method" value="X-ray"/>
    <property type="resolution" value="1.55 A"/>
    <property type="chains" value="A/B=22-281"/>
</dbReference>
<dbReference type="PDB" id="2IX9">
    <property type="method" value="X-ray"/>
    <property type="resolution" value="1.70 A"/>
    <property type="chains" value="A/B=22-281"/>
</dbReference>
<dbReference type="PDBsum" id="1USW"/>
<dbReference type="PDBsum" id="1UWC"/>
<dbReference type="PDBsum" id="1UZA"/>
<dbReference type="PDBsum" id="2BJH"/>
<dbReference type="PDBsum" id="2HL6"/>
<dbReference type="PDBsum" id="2IX9"/>
<dbReference type="SMR" id="O42807"/>
<dbReference type="ESTHER" id="aspni-FAEA">
    <property type="family name" value="Lipase_3"/>
</dbReference>
<dbReference type="GlyCosmos" id="O42807">
    <property type="glycosylation" value="1 site, No reported glycans"/>
</dbReference>
<dbReference type="iPTMnet" id="O42807"/>
<dbReference type="PaxDb" id="5061-CADANGAP00007416"/>
<dbReference type="KEGG" id="ang:An09g00120"/>
<dbReference type="VEuPathDB" id="FungiDB:An09g00120"/>
<dbReference type="VEuPathDB" id="FungiDB:ASPNIDRAFT2_1180590"/>
<dbReference type="VEuPathDB" id="FungiDB:ATCC64974_6040"/>
<dbReference type="VEuPathDB" id="FungiDB:M747DRAFT_361454"/>
<dbReference type="eggNOG" id="KOG4569">
    <property type="taxonomic scope" value="Eukaryota"/>
</dbReference>
<dbReference type="BioCyc" id="MetaCyc:MONOMER-16832"/>
<dbReference type="BRENDA" id="3.1.1.73">
    <property type="organism ID" value="518"/>
</dbReference>
<dbReference type="EvolutionaryTrace" id="O42807"/>
<dbReference type="GO" id="GO:0005576">
    <property type="term" value="C:extracellular region"/>
    <property type="evidence" value="ECO:0000314"/>
    <property type="project" value="UniProtKB"/>
</dbReference>
<dbReference type="GO" id="GO:0030248">
    <property type="term" value="F:cellulose binding"/>
    <property type="evidence" value="ECO:0000314"/>
    <property type="project" value="UniProtKB"/>
</dbReference>
<dbReference type="GO" id="GO:0030600">
    <property type="term" value="F:feruloyl esterase activity"/>
    <property type="evidence" value="ECO:0000314"/>
    <property type="project" value="UniProtKB"/>
</dbReference>
<dbReference type="GO" id="GO:0016998">
    <property type="term" value="P:cell wall macromolecule catabolic process"/>
    <property type="evidence" value="ECO:0000314"/>
    <property type="project" value="UniProtKB"/>
</dbReference>
<dbReference type="GO" id="GO:0030245">
    <property type="term" value="P:cellulose catabolic process"/>
    <property type="evidence" value="ECO:0000314"/>
    <property type="project" value="UniProtKB"/>
</dbReference>
<dbReference type="GO" id="GO:0006629">
    <property type="term" value="P:lipid metabolic process"/>
    <property type="evidence" value="ECO:0007669"/>
    <property type="project" value="InterPro"/>
</dbReference>
<dbReference type="GO" id="GO:0045490">
    <property type="term" value="P:pectin catabolic process"/>
    <property type="evidence" value="ECO:0000314"/>
    <property type="project" value="UniProtKB"/>
</dbReference>
<dbReference type="GO" id="GO:0045493">
    <property type="term" value="P:xylan catabolic process"/>
    <property type="evidence" value="ECO:0000314"/>
    <property type="project" value="UniProtKB"/>
</dbReference>
<dbReference type="CDD" id="cd00519">
    <property type="entry name" value="Lipase_3"/>
    <property type="match status" value="1"/>
</dbReference>
<dbReference type="FunFam" id="3.40.50.1820:FF:000260">
    <property type="entry name" value="Feruloyl esterase A"/>
    <property type="match status" value="1"/>
</dbReference>
<dbReference type="Gene3D" id="3.40.50.1820">
    <property type="entry name" value="alpha/beta hydrolase"/>
    <property type="match status" value="1"/>
</dbReference>
<dbReference type="InterPro" id="IPR029058">
    <property type="entry name" value="AB_hydrolase_fold"/>
</dbReference>
<dbReference type="InterPro" id="IPR051299">
    <property type="entry name" value="AB_hydrolase_lip/est"/>
</dbReference>
<dbReference type="InterPro" id="IPR002921">
    <property type="entry name" value="Fungal_lipase-type"/>
</dbReference>
<dbReference type="PANTHER" id="PTHR46640:SF1">
    <property type="entry name" value="FUNGAL LIPASE-LIKE DOMAIN-CONTAINING PROTEIN-RELATED"/>
    <property type="match status" value="1"/>
</dbReference>
<dbReference type="PANTHER" id="PTHR46640">
    <property type="entry name" value="TRIACYLGLYCEROL LIPASE, PUTATIVE (AFU_ORTHOLOGUE AFUA_6G06510)-RELATED"/>
    <property type="match status" value="1"/>
</dbReference>
<dbReference type="Pfam" id="PF01764">
    <property type="entry name" value="Lipase_3"/>
    <property type="match status" value="1"/>
</dbReference>
<dbReference type="SUPFAM" id="SSF53474">
    <property type="entry name" value="alpha/beta-Hydrolases"/>
    <property type="match status" value="1"/>
</dbReference>
<dbReference type="PROSITE" id="PS00120">
    <property type="entry name" value="LIPASE_SER"/>
    <property type="match status" value="1"/>
</dbReference>
<gene>
    <name type="primary">faeA</name>
</gene>